<keyword id="KW-0143">Chaperone</keyword>
<keyword id="KW-0963">Cytoplasm</keyword>
<keyword id="KW-0235">DNA replication</keyword>
<keyword id="KW-0479">Metal-binding</keyword>
<keyword id="KW-0677">Repeat</keyword>
<keyword id="KW-0346">Stress response</keyword>
<keyword id="KW-0862">Zinc</keyword>
<keyword id="KW-0863">Zinc-finger</keyword>
<comment type="function">
    <text evidence="1">Participates actively in the response to hyperosmotic and heat shock by preventing the aggregation of stress-denatured proteins and by disaggregating proteins, also in an autonomous, DnaK-independent fashion. Unfolded proteins bind initially to DnaJ; upon interaction with the DnaJ-bound protein, DnaK hydrolyzes its bound ATP, resulting in the formation of a stable complex. GrpE releases ADP from DnaK; ATP binding to DnaK triggers the release of the substrate protein, thus completing the reaction cycle. Several rounds of ATP-dependent interactions between DnaJ, DnaK and GrpE are required for fully efficient folding. Also involved, together with DnaK and GrpE, in the DNA replication of plasmids through activation of initiation proteins.</text>
</comment>
<comment type="cofactor">
    <cofactor evidence="1">
        <name>Zn(2+)</name>
        <dbReference type="ChEBI" id="CHEBI:29105"/>
    </cofactor>
    <text evidence="1">Binds 2 Zn(2+) ions per monomer.</text>
</comment>
<comment type="subunit">
    <text evidence="1">Homodimer.</text>
</comment>
<comment type="subcellular location">
    <subcellularLocation>
        <location evidence="1">Cytoplasm</location>
    </subcellularLocation>
</comment>
<comment type="domain">
    <text evidence="1">The J domain is necessary and sufficient to stimulate DnaK ATPase activity. Zinc center 1 plays an important role in the autonomous, DnaK-independent chaperone activity of DnaJ. Zinc center 2 is essential for interaction with DnaK and for DnaJ activity.</text>
</comment>
<comment type="similarity">
    <text evidence="1">Belongs to the DnaJ family.</text>
</comment>
<feature type="chain" id="PRO_1000085202" description="Chaperone protein DnaJ">
    <location>
        <begin position="1"/>
        <end position="382"/>
    </location>
</feature>
<feature type="domain" description="J" evidence="1">
    <location>
        <begin position="5"/>
        <end position="70"/>
    </location>
</feature>
<feature type="repeat" description="CXXCXGXG motif">
    <location>
        <begin position="147"/>
        <end position="154"/>
    </location>
</feature>
<feature type="repeat" description="CXXCXGXG motif">
    <location>
        <begin position="164"/>
        <end position="171"/>
    </location>
</feature>
<feature type="repeat" description="CXXCXGXG motif">
    <location>
        <begin position="186"/>
        <end position="193"/>
    </location>
</feature>
<feature type="repeat" description="CXXCXGXG motif">
    <location>
        <begin position="200"/>
        <end position="207"/>
    </location>
</feature>
<feature type="zinc finger region" description="CR-type" evidence="1">
    <location>
        <begin position="134"/>
        <end position="212"/>
    </location>
</feature>
<feature type="binding site" evidence="1">
    <location>
        <position position="147"/>
    </location>
    <ligand>
        <name>Zn(2+)</name>
        <dbReference type="ChEBI" id="CHEBI:29105"/>
        <label>1</label>
    </ligand>
</feature>
<feature type="binding site" evidence="1">
    <location>
        <position position="150"/>
    </location>
    <ligand>
        <name>Zn(2+)</name>
        <dbReference type="ChEBI" id="CHEBI:29105"/>
        <label>1</label>
    </ligand>
</feature>
<feature type="binding site" evidence="1">
    <location>
        <position position="164"/>
    </location>
    <ligand>
        <name>Zn(2+)</name>
        <dbReference type="ChEBI" id="CHEBI:29105"/>
        <label>2</label>
    </ligand>
</feature>
<feature type="binding site" evidence="1">
    <location>
        <position position="167"/>
    </location>
    <ligand>
        <name>Zn(2+)</name>
        <dbReference type="ChEBI" id="CHEBI:29105"/>
        <label>2</label>
    </ligand>
</feature>
<feature type="binding site" evidence="1">
    <location>
        <position position="186"/>
    </location>
    <ligand>
        <name>Zn(2+)</name>
        <dbReference type="ChEBI" id="CHEBI:29105"/>
        <label>2</label>
    </ligand>
</feature>
<feature type="binding site" evidence="1">
    <location>
        <position position="189"/>
    </location>
    <ligand>
        <name>Zn(2+)</name>
        <dbReference type="ChEBI" id="CHEBI:29105"/>
        <label>2</label>
    </ligand>
</feature>
<feature type="binding site" evidence="1">
    <location>
        <position position="200"/>
    </location>
    <ligand>
        <name>Zn(2+)</name>
        <dbReference type="ChEBI" id="CHEBI:29105"/>
        <label>1</label>
    </ligand>
</feature>
<feature type="binding site" evidence="1">
    <location>
        <position position="203"/>
    </location>
    <ligand>
        <name>Zn(2+)</name>
        <dbReference type="ChEBI" id="CHEBI:29105"/>
        <label>1</label>
    </ligand>
</feature>
<gene>
    <name evidence="1" type="primary">dnaJ</name>
    <name type="ordered locus">CGSHiGG_01820</name>
</gene>
<dbReference type="EMBL" id="CP000672">
    <property type="protein sequence ID" value="ABQ99422.1"/>
    <property type="molecule type" value="Genomic_DNA"/>
</dbReference>
<dbReference type="SMR" id="A5UF67"/>
<dbReference type="KEGG" id="hiq:CGSHiGG_01820"/>
<dbReference type="HOGENOM" id="CLU_017633_0_7_6"/>
<dbReference type="Proteomes" id="UP000001990">
    <property type="component" value="Chromosome"/>
</dbReference>
<dbReference type="GO" id="GO:0005737">
    <property type="term" value="C:cytoplasm"/>
    <property type="evidence" value="ECO:0007669"/>
    <property type="project" value="UniProtKB-SubCell"/>
</dbReference>
<dbReference type="GO" id="GO:0005524">
    <property type="term" value="F:ATP binding"/>
    <property type="evidence" value="ECO:0007669"/>
    <property type="project" value="InterPro"/>
</dbReference>
<dbReference type="GO" id="GO:0031072">
    <property type="term" value="F:heat shock protein binding"/>
    <property type="evidence" value="ECO:0007669"/>
    <property type="project" value="InterPro"/>
</dbReference>
<dbReference type="GO" id="GO:0051082">
    <property type="term" value="F:unfolded protein binding"/>
    <property type="evidence" value="ECO:0007669"/>
    <property type="project" value="UniProtKB-UniRule"/>
</dbReference>
<dbReference type="GO" id="GO:0008270">
    <property type="term" value="F:zinc ion binding"/>
    <property type="evidence" value="ECO:0007669"/>
    <property type="project" value="UniProtKB-UniRule"/>
</dbReference>
<dbReference type="GO" id="GO:0051085">
    <property type="term" value="P:chaperone cofactor-dependent protein refolding"/>
    <property type="evidence" value="ECO:0007669"/>
    <property type="project" value="TreeGrafter"/>
</dbReference>
<dbReference type="GO" id="GO:0006260">
    <property type="term" value="P:DNA replication"/>
    <property type="evidence" value="ECO:0007669"/>
    <property type="project" value="UniProtKB-KW"/>
</dbReference>
<dbReference type="GO" id="GO:0042026">
    <property type="term" value="P:protein refolding"/>
    <property type="evidence" value="ECO:0007669"/>
    <property type="project" value="TreeGrafter"/>
</dbReference>
<dbReference type="GO" id="GO:0009408">
    <property type="term" value="P:response to heat"/>
    <property type="evidence" value="ECO:0007669"/>
    <property type="project" value="InterPro"/>
</dbReference>
<dbReference type="CDD" id="cd06257">
    <property type="entry name" value="DnaJ"/>
    <property type="match status" value="1"/>
</dbReference>
<dbReference type="CDD" id="cd10747">
    <property type="entry name" value="DnaJ_C"/>
    <property type="match status" value="1"/>
</dbReference>
<dbReference type="CDD" id="cd10719">
    <property type="entry name" value="DnaJ_zf"/>
    <property type="match status" value="1"/>
</dbReference>
<dbReference type="FunFam" id="1.10.287.110:FF:000034">
    <property type="entry name" value="Chaperone protein DnaJ"/>
    <property type="match status" value="1"/>
</dbReference>
<dbReference type="FunFam" id="2.10.230.10:FF:000002">
    <property type="entry name" value="Molecular chaperone DnaJ"/>
    <property type="match status" value="1"/>
</dbReference>
<dbReference type="FunFam" id="2.60.260.20:FF:000004">
    <property type="entry name" value="Molecular chaperone DnaJ"/>
    <property type="match status" value="1"/>
</dbReference>
<dbReference type="Gene3D" id="1.10.287.110">
    <property type="entry name" value="DnaJ domain"/>
    <property type="match status" value="1"/>
</dbReference>
<dbReference type="Gene3D" id="2.10.230.10">
    <property type="entry name" value="Heat shock protein DnaJ, cysteine-rich domain"/>
    <property type="match status" value="1"/>
</dbReference>
<dbReference type="Gene3D" id="2.60.260.20">
    <property type="entry name" value="Urease metallochaperone UreE, N-terminal domain"/>
    <property type="match status" value="2"/>
</dbReference>
<dbReference type="HAMAP" id="MF_01152">
    <property type="entry name" value="DnaJ"/>
    <property type="match status" value="1"/>
</dbReference>
<dbReference type="InterPro" id="IPR012724">
    <property type="entry name" value="DnaJ"/>
</dbReference>
<dbReference type="InterPro" id="IPR002939">
    <property type="entry name" value="DnaJ_C"/>
</dbReference>
<dbReference type="InterPro" id="IPR001623">
    <property type="entry name" value="DnaJ_domain"/>
</dbReference>
<dbReference type="InterPro" id="IPR018253">
    <property type="entry name" value="DnaJ_domain_CS"/>
</dbReference>
<dbReference type="InterPro" id="IPR008971">
    <property type="entry name" value="HSP40/DnaJ_pept-bd"/>
</dbReference>
<dbReference type="InterPro" id="IPR001305">
    <property type="entry name" value="HSP_DnaJ_Cys-rich_dom"/>
</dbReference>
<dbReference type="InterPro" id="IPR036410">
    <property type="entry name" value="HSP_DnaJ_Cys-rich_dom_sf"/>
</dbReference>
<dbReference type="InterPro" id="IPR036869">
    <property type="entry name" value="J_dom_sf"/>
</dbReference>
<dbReference type="NCBIfam" id="TIGR02349">
    <property type="entry name" value="DnaJ_bact"/>
    <property type="match status" value="1"/>
</dbReference>
<dbReference type="NCBIfam" id="NF008035">
    <property type="entry name" value="PRK10767.1"/>
    <property type="match status" value="1"/>
</dbReference>
<dbReference type="PANTHER" id="PTHR43096:SF48">
    <property type="entry name" value="CHAPERONE PROTEIN DNAJ"/>
    <property type="match status" value="1"/>
</dbReference>
<dbReference type="PANTHER" id="PTHR43096">
    <property type="entry name" value="DNAJ HOMOLOG 1, MITOCHONDRIAL-RELATED"/>
    <property type="match status" value="1"/>
</dbReference>
<dbReference type="Pfam" id="PF00226">
    <property type="entry name" value="DnaJ"/>
    <property type="match status" value="1"/>
</dbReference>
<dbReference type="Pfam" id="PF01556">
    <property type="entry name" value="DnaJ_C"/>
    <property type="match status" value="1"/>
</dbReference>
<dbReference type="Pfam" id="PF00684">
    <property type="entry name" value="DnaJ_CXXCXGXG"/>
    <property type="match status" value="1"/>
</dbReference>
<dbReference type="PRINTS" id="PR00625">
    <property type="entry name" value="JDOMAIN"/>
</dbReference>
<dbReference type="SMART" id="SM00271">
    <property type="entry name" value="DnaJ"/>
    <property type="match status" value="1"/>
</dbReference>
<dbReference type="SUPFAM" id="SSF46565">
    <property type="entry name" value="Chaperone J-domain"/>
    <property type="match status" value="1"/>
</dbReference>
<dbReference type="SUPFAM" id="SSF57938">
    <property type="entry name" value="DnaJ/Hsp40 cysteine-rich domain"/>
    <property type="match status" value="1"/>
</dbReference>
<dbReference type="SUPFAM" id="SSF49493">
    <property type="entry name" value="HSP40/DnaJ peptide-binding domain"/>
    <property type="match status" value="2"/>
</dbReference>
<dbReference type="PROSITE" id="PS00636">
    <property type="entry name" value="DNAJ_1"/>
    <property type="match status" value="1"/>
</dbReference>
<dbReference type="PROSITE" id="PS50076">
    <property type="entry name" value="DNAJ_2"/>
    <property type="match status" value="1"/>
</dbReference>
<dbReference type="PROSITE" id="PS51188">
    <property type="entry name" value="ZF_CR"/>
    <property type="match status" value="1"/>
</dbReference>
<proteinExistence type="inferred from homology"/>
<reference key="1">
    <citation type="journal article" date="2007" name="Genome Biol.">
        <title>Characterization and modeling of the Haemophilus influenzae core and supragenomes based on the complete genomic sequences of Rd and 12 clinical nontypeable strains.</title>
        <authorList>
            <person name="Hogg J.S."/>
            <person name="Hu F.Z."/>
            <person name="Janto B."/>
            <person name="Boissy R."/>
            <person name="Hayes J."/>
            <person name="Keefe R."/>
            <person name="Post J.C."/>
            <person name="Ehrlich G.D."/>
        </authorList>
    </citation>
    <scope>NUCLEOTIDE SEQUENCE [LARGE SCALE GENOMIC DNA]</scope>
    <source>
        <strain>PittGG</strain>
    </source>
</reference>
<evidence type="ECO:0000255" key="1">
    <source>
        <dbReference type="HAMAP-Rule" id="MF_01152"/>
    </source>
</evidence>
<name>DNAJ_HAEIG</name>
<protein>
    <recommendedName>
        <fullName evidence="1">Chaperone protein DnaJ</fullName>
    </recommendedName>
</protein>
<organism>
    <name type="scientific">Haemophilus influenzae (strain PittGG)</name>
    <dbReference type="NCBI Taxonomy" id="374931"/>
    <lineage>
        <taxon>Bacteria</taxon>
        <taxon>Pseudomonadati</taxon>
        <taxon>Pseudomonadota</taxon>
        <taxon>Gammaproteobacteria</taxon>
        <taxon>Pasteurellales</taxon>
        <taxon>Pasteurellaceae</taxon>
        <taxon>Haemophilus</taxon>
    </lineage>
</organism>
<accession>A5UF67</accession>
<sequence>MAKKDYYEVLGLKKGASENDIKRAYKRLASKHHPDKNQGSKEAEEKFKEINEAYEVLGDDQKRAAYDQYGHAAFEQGGGAGGFGGGFGGADFGDMFGDIFGDIFGGGGRGRQRVVRGEDLRYDLEITLEEAVKGTTKDIQINTLAHCDSCGGSGAEKGSKVETCPHCHGSGRIRRQQGFFVSESICPSCHGSGKKIEKPCRSCHGEGRVHKKENLSVKIPAGVDTGNQLRLAGKGAVGENGAPAGDLYVVIHVREHHIFERDGSNLYCEVPISFAIAALGGEIEVPTLDGRVKLKIPAETQTGKLFRMRGKGVASTRSGYAGDLICRIVVETPVNLTSEQKELLHKLEESLQGKDLSKHAPKSSGFLDGVKKFFDNLGKSDK</sequence>